<proteinExistence type="inferred from homology"/>
<evidence type="ECO:0000255" key="1">
    <source>
        <dbReference type="HAMAP-Rule" id="MF_01361"/>
    </source>
</evidence>
<feature type="chain" id="PRO_0000256758" description="UPF0391 membrane protein PSHAa0537">
    <location>
        <begin position="1"/>
        <end position="56"/>
    </location>
</feature>
<feature type="transmembrane region" description="Helical" evidence="1">
    <location>
        <begin position="6"/>
        <end position="26"/>
    </location>
</feature>
<feature type="transmembrane region" description="Helical" evidence="1">
    <location>
        <begin position="27"/>
        <end position="47"/>
    </location>
</feature>
<dbReference type="EMBL" id="CR954246">
    <property type="protein sequence ID" value="CAI85626.1"/>
    <property type="molecule type" value="Genomic_DNA"/>
</dbReference>
<dbReference type="STRING" id="326442.PSHAa0537"/>
<dbReference type="KEGG" id="pha:PSHAa0537"/>
<dbReference type="eggNOG" id="COG5487">
    <property type="taxonomic scope" value="Bacteria"/>
</dbReference>
<dbReference type="HOGENOM" id="CLU_187346_1_0_6"/>
<dbReference type="BioCyc" id="PHAL326442:PSHA_RS17575-MONOMER"/>
<dbReference type="Proteomes" id="UP000006843">
    <property type="component" value="Chromosome I"/>
</dbReference>
<dbReference type="GO" id="GO:0005886">
    <property type="term" value="C:plasma membrane"/>
    <property type="evidence" value="ECO:0007669"/>
    <property type="project" value="UniProtKB-SubCell"/>
</dbReference>
<dbReference type="HAMAP" id="MF_01361">
    <property type="entry name" value="UPF0391"/>
    <property type="match status" value="1"/>
</dbReference>
<dbReference type="InterPro" id="IPR009760">
    <property type="entry name" value="DUF1328"/>
</dbReference>
<dbReference type="NCBIfam" id="NF010226">
    <property type="entry name" value="PRK13682.1-1"/>
    <property type="match status" value="1"/>
</dbReference>
<dbReference type="NCBIfam" id="NF010228">
    <property type="entry name" value="PRK13682.1-3"/>
    <property type="match status" value="1"/>
</dbReference>
<dbReference type="NCBIfam" id="NF010229">
    <property type="entry name" value="PRK13682.1-4"/>
    <property type="match status" value="1"/>
</dbReference>
<dbReference type="Pfam" id="PF07043">
    <property type="entry name" value="DUF1328"/>
    <property type="match status" value="1"/>
</dbReference>
<dbReference type="PIRSF" id="PIRSF036466">
    <property type="entry name" value="UCP036466"/>
    <property type="match status" value="1"/>
</dbReference>
<keyword id="KW-1003">Cell membrane</keyword>
<keyword id="KW-0472">Membrane</keyword>
<keyword id="KW-1185">Reference proteome</keyword>
<keyword id="KW-0812">Transmembrane</keyword>
<keyword id="KW-1133">Transmembrane helix</keyword>
<gene>
    <name type="ordered locus">PSHAa0537</name>
</gene>
<comment type="subcellular location">
    <subcellularLocation>
        <location evidence="1">Cell membrane</location>
        <topology evidence="1">Multi-pass membrane protein</topology>
    </subcellularLocation>
</comment>
<comment type="similarity">
    <text evidence="1">Belongs to the UPF0391 family.</text>
</comment>
<name>Y537_PSET1</name>
<organism>
    <name type="scientific">Pseudoalteromonas translucida (strain TAC 125)</name>
    <dbReference type="NCBI Taxonomy" id="326442"/>
    <lineage>
        <taxon>Bacteria</taxon>
        <taxon>Pseudomonadati</taxon>
        <taxon>Pseudomonadota</taxon>
        <taxon>Gammaproteobacteria</taxon>
        <taxon>Alteromonadales</taxon>
        <taxon>Pseudoalteromonadaceae</taxon>
        <taxon>Pseudoalteromonas</taxon>
    </lineage>
</organism>
<protein>
    <recommendedName>
        <fullName evidence="1">UPF0391 membrane protein PSHAa0537</fullName>
    </recommendedName>
</protein>
<sequence length="56" mass="5827">MLRWTITFLVIALIAAVLGFGGIAGAAAGIAKIIFFIFLILLVISLVSGALRGKKP</sequence>
<reference key="1">
    <citation type="journal article" date="2005" name="Genome Res.">
        <title>Coping with cold: the genome of the versatile marine Antarctica bacterium Pseudoalteromonas haloplanktis TAC125.</title>
        <authorList>
            <person name="Medigue C."/>
            <person name="Krin E."/>
            <person name="Pascal G."/>
            <person name="Barbe V."/>
            <person name="Bernsel A."/>
            <person name="Bertin P.N."/>
            <person name="Cheung F."/>
            <person name="Cruveiller S."/>
            <person name="D'Amico S."/>
            <person name="Duilio A."/>
            <person name="Fang G."/>
            <person name="Feller G."/>
            <person name="Ho C."/>
            <person name="Mangenot S."/>
            <person name="Marino G."/>
            <person name="Nilsson J."/>
            <person name="Parrilli E."/>
            <person name="Rocha E.P.C."/>
            <person name="Rouy Z."/>
            <person name="Sekowska A."/>
            <person name="Tutino M.L."/>
            <person name="Vallenet D."/>
            <person name="von Heijne G."/>
            <person name="Danchin A."/>
        </authorList>
    </citation>
    <scope>NUCLEOTIDE SEQUENCE [LARGE SCALE GENOMIC DNA]</scope>
    <source>
        <strain>TAC 125</strain>
    </source>
</reference>
<accession>Q3ILE8</accession>